<name>RS4Y2_PANTR</name>
<keyword id="KW-1185">Reference proteome</keyword>
<keyword id="KW-0687">Ribonucleoprotein</keyword>
<keyword id="KW-0689">Ribosomal protein</keyword>
<keyword id="KW-0694">RNA-binding</keyword>
<keyword id="KW-0699">rRNA-binding</keyword>
<sequence>MARGPKKHLKRVAAPKHWMLDKLTGVFAPRPSTGPHKLRECLPLIVFLRNRLKYALTGDEVKKICMQRFIKIDGKVRVDITYPAGFMDVISIEKTGEHFRLVYDTKGRFAVHRITVEEAKYKLCKVRKITVGTKGIPHLVTHDARTIRYPDPLIKVNDTVQIDLGTGKITSFIKFDTGNVCMVIGGANLGRVGVVTNRERHPGSCDVVHVKDANGNSFATRISNIFVIGNGNKPWISLPRGKGIRLTIAEERDKRLAAKQSSG</sequence>
<reference key="1">
    <citation type="submission" date="2004-05" db="EMBL/GenBank/DDBJ databases">
        <title>The DNA sequence of the chimpanzee Y chromosome.</title>
        <authorList>
            <person name="Hughes J.F."/>
            <person name="Pyntikova T."/>
            <person name="Skaletsky H."/>
            <person name="Minx P.J."/>
            <person name="Rozen S."/>
            <person name="Wilson R.K."/>
            <person name="Page D.C."/>
        </authorList>
    </citation>
    <scope>NUCLEOTIDE SEQUENCE [MRNA]</scope>
</reference>
<gene>
    <name type="primary">RPS4Y2</name>
</gene>
<dbReference type="EMBL" id="AY633111">
    <property type="protein sequence ID" value="AAT46348.1"/>
    <property type="molecule type" value="mRNA"/>
</dbReference>
<dbReference type="RefSeq" id="NP_001009024.1">
    <property type="nucleotide sequence ID" value="NM_001009024.2"/>
</dbReference>
<dbReference type="SMR" id="Q6GVM7"/>
<dbReference type="FunCoup" id="Q6GVM7">
    <property type="interactions" value="187"/>
</dbReference>
<dbReference type="STRING" id="9598.ENSPTRP00000038799"/>
<dbReference type="PaxDb" id="9598-ENSPTRP00000038799"/>
<dbReference type="Ensembl" id="ENSPTRT00000042032.3">
    <property type="protein sequence ID" value="ENSPTRP00000038799.2"/>
    <property type="gene ID" value="ENSPTRG00000022505.7"/>
</dbReference>
<dbReference type="GeneID" id="449636"/>
<dbReference type="KEGG" id="ptr:449636"/>
<dbReference type="CTD" id="140032"/>
<dbReference type="VGNC" id="VGNC:5890">
    <property type="gene designation" value="RPS4Y2"/>
</dbReference>
<dbReference type="eggNOG" id="KOG0378">
    <property type="taxonomic scope" value="Eukaryota"/>
</dbReference>
<dbReference type="GeneTree" id="ENSGT00390000005569"/>
<dbReference type="HOGENOM" id="CLU_060400_1_0_1"/>
<dbReference type="InParanoid" id="Q6GVM7"/>
<dbReference type="OMA" id="HPGSCDV"/>
<dbReference type="TreeFam" id="TF300612"/>
<dbReference type="Proteomes" id="UP000002277">
    <property type="component" value="Chromosome Y"/>
</dbReference>
<dbReference type="Bgee" id="ENSPTRG00000022505">
    <property type="expression patterns" value="Expressed in testis and 11 other cell types or tissues"/>
</dbReference>
<dbReference type="GO" id="GO:0022627">
    <property type="term" value="C:cytosolic small ribosomal subunit"/>
    <property type="evidence" value="ECO:0000318"/>
    <property type="project" value="GO_Central"/>
</dbReference>
<dbReference type="GO" id="GO:0003723">
    <property type="term" value="F:RNA binding"/>
    <property type="evidence" value="ECO:0000318"/>
    <property type="project" value="GO_Central"/>
</dbReference>
<dbReference type="GO" id="GO:0019843">
    <property type="term" value="F:rRNA binding"/>
    <property type="evidence" value="ECO:0007669"/>
    <property type="project" value="UniProtKB-KW"/>
</dbReference>
<dbReference type="GO" id="GO:0003735">
    <property type="term" value="F:structural constituent of ribosome"/>
    <property type="evidence" value="ECO:0000318"/>
    <property type="project" value="GO_Central"/>
</dbReference>
<dbReference type="GO" id="GO:0006412">
    <property type="term" value="P:translation"/>
    <property type="evidence" value="ECO:0000318"/>
    <property type="project" value="GO_Central"/>
</dbReference>
<dbReference type="CDD" id="cd06087">
    <property type="entry name" value="KOW_RPS4"/>
    <property type="match status" value="1"/>
</dbReference>
<dbReference type="CDD" id="cd00165">
    <property type="entry name" value="S4"/>
    <property type="match status" value="1"/>
</dbReference>
<dbReference type="FunFam" id="2.30.30.30:FF:000005">
    <property type="entry name" value="40S ribosomal protein S4"/>
    <property type="match status" value="1"/>
</dbReference>
<dbReference type="FunFam" id="2.40.50.740:FF:000001">
    <property type="entry name" value="40S ribosomal protein S4"/>
    <property type="match status" value="1"/>
</dbReference>
<dbReference type="FunFam" id="3.10.290.10:FF:000051">
    <property type="entry name" value="40S ribosomal protein S4, X isoform"/>
    <property type="match status" value="1"/>
</dbReference>
<dbReference type="Gene3D" id="2.30.30.30">
    <property type="match status" value="1"/>
</dbReference>
<dbReference type="Gene3D" id="2.40.50.740">
    <property type="match status" value="1"/>
</dbReference>
<dbReference type="Gene3D" id="3.10.290.10">
    <property type="entry name" value="RNA-binding S4 domain"/>
    <property type="match status" value="1"/>
</dbReference>
<dbReference type="HAMAP" id="MF_00485">
    <property type="entry name" value="Ribosomal_eS4"/>
    <property type="match status" value="1"/>
</dbReference>
<dbReference type="InterPro" id="IPR005824">
    <property type="entry name" value="KOW"/>
</dbReference>
<dbReference type="InterPro" id="IPR014722">
    <property type="entry name" value="Rib_uL2_dom2"/>
</dbReference>
<dbReference type="InterPro" id="IPR000876">
    <property type="entry name" value="Ribosomal_eS4"/>
</dbReference>
<dbReference type="InterPro" id="IPR032277">
    <property type="entry name" value="Ribosomal_eS4_C"/>
</dbReference>
<dbReference type="InterPro" id="IPR013845">
    <property type="entry name" value="Ribosomal_eS4_central_region"/>
</dbReference>
<dbReference type="InterPro" id="IPR038237">
    <property type="entry name" value="Ribosomal_eS4_central_sf"/>
</dbReference>
<dbReference type="InterPro" id="IPR041982">
    <property type="entry name" value="Ribosomal_eS4_KOW"/>
</dbReference>
<dbReference type="InterPro" id="IPR013843">
    <property type="entry name" value="Ribosomal_eS4_N"/>
</dbReference>
<dbReference type="InterPro" id="IPR018199">
    <property type="entry name" value="Ribosomal_eS4_N_CS"/>
</dbReference>
<dbReference type="InterPro" id="IPR002942">
    <property type="entry name" value="S4_RNA-bd"/>
</dbReference>
<dbReference type="InterPro" id="IPR036986">
    <property type="entry name" value="S4_RNA-bd_sf"/>
</dbReference>
<dbReference type="PANTHER" id="PTHR11581">
    <property type="entry name" value="30S/40S RIBOSOMAL PROTEIN S4"/>
    <property type="match status" value="1"/>
</dbReference>
<dbReference type="PANTHER" id="PTHR11581:SF7">
    <property type="entry name" value="SMALL RIBOSOMAL SUBUNIT PROTEIN ES4, Y ISOFORM 2"/>
    <property type="match status" value="1"/>
</dbReference>
<dbReference type="Pfam" id="PF16121">
    <property type="entry name" value="40S_S4_C"/>
    <property type="match status" value="1"/>
</dbReference>
<dbReference type="Pfam" id="PF00467">
    <property type="entry name" value="KOW"/>
    <property type="match status" value="1"/>
</dbReference>
<dbReference type="Pfam" id="PF00900">
    <property type="entry name" value="Ribosomal_S4e"/>
    <property type="match status" value="1"/>
</dbReference>
<dbReference type="Pfam" id="PF08071">
    <property type="entry name" value="RS4NT"/>
    <property type="match status" value="1"/>
</dbReference>
<dbReference type="PIRSF" id="PIRSF002116">
    <property type="entry name" value="Ribosomal_S4"/>
    <property type="match status" value="1"/>
</dbReference>
<dbReference type="SMART" id="SM00363">
    <property type="entry name" value="S4"/>
    <property type="match status" value="1"/>
</dbReference>
<dbReference type="PROSITE" id="PS00528">
    <property type="entry name" value="RIBOSOMAL_S4E"/>
    <property type="match status" value="1"/>
</dbReference>
<dbReference type="PROSITE" id="PS50889">
    <property type="entry name" value="S4"/>
    <property type="match status" value="1"/>
</dbReference>
<comment type="similarity">
    <text evidence="1">Belongs to the eukaryotic ribosomal protein eS4 family.</text>
</comment>
<proteinExistence type="evidence at transcript level"/>
<evidence type="ECO:0000305" key="1"/>
<organism>
    <name type="scientific">Pan troglodytes</name>
    <name type="common">Chimpanzee</name>
    <dbReference type="NCBI Taxonomy" id="9598"/>
    <lineage>
        <taxon>Eukaryota</taxon>
        <taxon>Metazoa</taxon>
        <taxon>Chordata</taxon>
        <taxon>Craniata</taxon>
        <taxon>Vertebrata</taxon>
        <taxon>Euteleostomi</taxon>
        <taxon>Mammalia</taxon>
        <taxon>Eutheria</taxon>
        <taxon>Euarchontoglires</taxon>
        <taxon>Primates</taxon>
        <taxon>Haplorrhini</taxon>
        <taxon>Catarrhini</taxon>
        <taxon>Hominidae</taxon>
        <taxon>Pan</taxon>
    </lineage>
</organism>
<accession>Q6GVM7</accession>
<protein>
    <recommendedName>
        <fullName evidence="1">Small ribosomal subunit protein eS4, Y isoform 2</fullName>
    </recommendedName>
    <alternativeName>
        <fullName>40S ribosomal protein S4, Y isoform 2</fullName>
    </alternativeName>
</protein>
<feature type="chain" id="PRO_0000130819" description="Small ribosomal subunit protein eS4, Y isoform 2">
    <location>
        <begin position="1"/>
        <end position="263"/>
    </location>
</feature>
<feature type="domain" description="S4 RNA-binding">
    <location>
        <begin position="42"/>
        <end position="104"/>
    </location>
</feature>